<organism>
    <name type="scientific">Leifsonia xyli subsp. xyli (strain CTCB07)</name>
    <dbReference type="NCBI Taxonomy" id="281090"/>
    <lineage>
        <taxon>Bacteria</taxon>
        <taxon>Bacillati</taxon>
        <taxon>Actinomycetota</taxon>
        <taxon>Actinomycetes</taxon>
        <taxon>Micrococcales</taxon>
        <taxon>Microbacteriaceae</taxon>
        <taxon>Leifsonia</taxon>
    </lineage>
</organism>
<protein>
    <recommendedName>
        <fullName evidence="1">3-dehydroquinate synthase</fullName>
        <shortName evidence="1">DHQS</shortName>
        <ecNumber evidence="1">4.2.3.4</ecNumber>
    </recommendedName>
</protein>
<proteinExistence type="inferred from homology"/>
<comment type="function">
    <text evidence="1">Catalyzes the conversion of 3-deoxy-D-arabino-heptulosonate 7-phosphate (DAHP) to dehydroquinate (DHQ).</text>
</comment>
<comment type="catalytic activity">
    <reaction evidence="1">
        <text>7-phospho-2-dehydro-3-deoxy-D-arabino-heptonate = 3-dehydroquinate + phosphate</text>
        <dbReference type="Rhea" id="RHEA:21968"/>
        <dbReference type="ChEBI" id="CHEBI:32364"/>
        <dbReference type="ChEBI" id="CHEBI:43474"/>
        <dbReference type="ChEBI" id="CHEBI:58394"/>
        <dbReference type="EC" id="4.2.3.4"/>
    </reaction>
</comment>
<comment type="cofactor">
    <cofactor evidence="1">
        <name>NAD(+)</name>
        <dbReference type="ChEBI" id="CHEBI:57540"/>
    </cofactor>
</comment>
<comment type="cofactor">
    <cofactor evidence="1">
        <name>Co(2+)</name>
        <dbReference type="ChEBI" id="CHEBI:48828"/>
    </cofactor>
    <cofactor evidence="1">
        <name>Zn(2+)</name>
        <dbReference type="ChEBI" id="CHEBI:29105"/>
    </cofactor>
    <text evidence="1">Binds 1 divalent metal cation per subunit. Can use either Co(2+) or Zn(2+).</text>
</comment>
<comment type="pathway">
    <text evidence="1">Metabolic intermediate biosynthesis; chorismate biosynthesis; chorismate from D-erythrose 4-phosphate and phosphoenolpyruvate: step 2/7.</text>
</comment>
<comment type="subcellular location">
    <subcellularLocation>
        <location evidence="1">Cytoplasm</location>
    </subcellularLocation>
</comment>
<comment type="similarity">
    <text evidence="1">Belongs to the sugar phosphate cyclases superfamily. Dehydroquinate synthase family.</text>
</comment>
<name>AROB_LEIXX</name>
<keyword id="KW-0028">Amino-acid biosynthesis</keyword>
<keyword id="KW-0057">Aromatic amino acid biosynthesis</keyword>
<keyword id="KW-0170">Cobalt</keyword>
<keyword id="KW-0963">Cytoplasm</keyword>
<keyword id="KW-0456">Lyase</keyword>
<keyword id="KW-0479">Metal-binding</keyword>
<keyword id="KW-0520">NAD</keyword>
<keyword id="KW-0547">Nucleotide-binding</keyword>
<keyword id="KW-1185">Reference proteome</keyword>
<keyword id="KW-0862">Zinc</keyword>
<sequence length="359" mass="38427">MTDETTEILVAGANPYPVVIGRGLRFDLARHLGSAVSKVLVVHPPTLGAAAAELRESLAGQYEVLLTEVPDAEAAKRIEVASFLWCIMGQADFTRSDAVVGLGGGAVTDLAGFAAATWLRGVRLVQAPTTLLGMVDAAVGGKTGINTAEGKNLVGAFYAPAAVVCDLDMLISLGRNELLAGFAEVVKYGFIAEPEILDIIERDVDAATDPESAEFRRVVELSIGIKARVVGEDFTEQGLREILNYGHTLGHAIEHAERYQWRHGAAIAVGMVFAAELGRLSGRLSDDAVERHRRILASLTLPTSYPLGRWQTLLAAMQRDKKARGSLLRFIVLDDVARPTVLAGPDQSLLFAAYQEIAS</sequence>
<evidence type="ECO:0000255" key="1">
    <source>
        <dbReference type="HAMAP-Rule" id="MF_00110"/>
    </source>
</evidence>
<feature type="chain" id="PRO_0000140749" description="3-dehydroquinate synthase">
    <location>
        <begin position="1"/>
        <end position="359"/>
    </location>
</feature>
<feature type="binding site" evidence="1">
    <location>
        <begin position="71"/>
        <end position="76"/>
    </location>
    <ligand>
        <name>NAD(+)</name>
        <dbReference type="ChEBI" id="CHEBI:57540"/>
    </ligand>
</feature>
<feature type="binding site" evidence="1">
    <location>
        <begin position="105"/>
        <end position="109"/>
    </location>
    <ligand>
        <name>NAD(+)</name>
        <dbReference type="ChEBI" id="CHEBI:57540"/>
    </ligand>
</feature>
<feature type="binding site" evidence="1">
    <location>
        <begin position="129"/>
        <end position="130"/>
    </location>
    <ligand>
        <name>NAD(+)</name>
        <dbReference type="ChEBI" id="CHEBI:57540"/>
    </ligand>
</feature>
<feature type="binding site" evidence="1">
    <location>
        <position position="142"/>
    </location>
    <ligand>
        <name>NAD(+)</name>
        <dbReference type="ChEBI" id="CHEBI:57540"/>
    </ligand>
</feature>
<feature type="binding site" evidence="1">
    <location>
        <position position="151"/>
    </location>
    <ligand>
        <name>NAD(+)</name>
        <dbReference type="ChEBI" id="CHEBI:57540"/>
    </ligand>
</feature>
<feature type="binding site" evidence="1">
    <location>
        <position position="184"/>
    </location>
    <ligand>
        <name>Zn(2+)</name>
        <dbReference type="ChEBI" id="CHEBI:29105"/>
    </ligand>
</feature>
<feature type="binding site" evidence="1">
    <location>
        <position position="247"/>
    </location>
    <ligand>
        <name>Zn(2+)</name>
        <dbReference type="ChEBI" id="CHEBI:29105"/>
    </ligand>
</feature>
<feature type="binding site" evidence="1">
    <location>
        <position position="263"/>
    </location>
    <ligand>
        <name>Zn(2+)</name>
        <dbReference type="ChEBI" id="CHEBI:29105"/>
    </ligand>
</feature>
<accession>Q6AF95</accession>
<dbReference type="EC" id="4.2.3.4" evidence="1"/>
<dbReference type="EMBL" id="AE016822">
    <property type="protein sequence ID" value="AAT88950.1"/>
    <property type="molecule type" value="Genomic_DNA"/>
</dbReference>
<dbReference type="RefSeq" id="WP_011185946.1">
    <property type="nucleotide sequence ID" value="NC_006087.1"/>
</dbReference>
<dbReference type="SMR" id="Q6AF95"/>
<dbReference type="STRING" id="281090.Lxx10970"/>
<dbReference type="KEGG" id="lxx:Lxx10970"/>
<dbReference type="eggNOG" id="COG0337">
    <property type="taxonomic scope" value="Bacteria"/>
</dbReference>
<dbReference type="HOGENOM" id="CLU_001201_0_3_11"/>
<dbReference type="UniPathway" id="UPA00053">
    <property type="reaction ID" value="UER00085"/>
</dbReference>
<dbReference type="Proteomes" id="UP000001306">
    <property type="component" value="Chromosome"/>
</dbReference>
<dbReference type="GO" id="GO:0005737">
    <property type="term" value="C:cytoplasm"/>
    <property type="evidence" value="ECO:0007669"/>
    <property type="project" value="UniProtKB-SubCell"/>
</dbReference>
<dbReference type="GO" id="GO:0003856">
    <property type="term" value="F:3-dehydroquinate synthase activity"/>
    <property type="evidence" value="ECO:0007669"/>
    <property type="project" value="UniProtKB-UniRule"/>
</dbReference>
<dbReference type="GO" id="GO:0046872">
    <property type="term" value="F:metal ion binding"/>
    <property type="evidence" value="ECO:0007669"/>
    <property type="project" value="UniProtKB-KW"/>
</dbReference>
<dbReference type="GO" id="GO:0000166">
    <property type="term" value="F:nucleotide binding"/>
    <property type="evidence" value="ECO:0007669"/>
    <property type="project" value="UniProtKB-KW"/>
</dbReference>
<dbReference type="GO" id="GO:0008652">
    <property type="term" value="P:amino acid biosynthetic process"/>
    <property type="evidence" value="ECO:0007669"/>
    <property type="project" value="UniProtKB-KW"/>
</dbReference>
<dbReference type="GO" id="GO:0009073">
    <property type="term" value="P:aromatic amino acid family biosynthetic process"/>
    <property type="evidence" value="ECO:0007669"/>
    <property type="project" value="UniProtKB-KW"/>
</dbReference>
<dbReference type="GO" id="GO:0009423">
    <property type="term" value="P:chorismate biosynthetic process"/>
    <property type="evidence" value="ECO:0007669"/>
    <property type="project" value="UniProtKB-UniRule"/>
</dbReference>
<dbReference type="CDD" id="cd08195">
    <property type="entry name" value="DHQS"/>
    <property type="match status" value="1"/>
</dbReference>
<dbReference type="FunFam" id="3.40.50.1970:FF:000012">
    <property type="entry name" value="3-dehydroquinate synthase"/>
    <property type="match status" value="1"/>
</dbReference>
<dbReference type="Gene3D" id="3.40.50.1970">
    <property type="match status" value="1"/>
</dbReference>
<dbReference type="Gene3D" id="1.20.1090.10">
    <property type="entry name" value="Dehydroquinate synthase-like - alpha domain"/>
    <property type="match status" value="1"/>
</dbReference>
<dbReference type="HAMAP" id="MF_00110">
    <property type="entry name" value="DHQ_synthase"/>
    <property type="match status" value="1"/>
</dbReference>
<dbReference type="InterPro" id="IPR050071">
    <property type="entry name" value="Dehydroquinate_synthase"/>
</dbReference>
<dbReference type="InterPro" id="IPR016037">
    <property type="entry name" value="DHQ_synth_AroB"/>
</dbReference>
<dbReference type="InterPro" id="IPR030963">
    <property type="entry name" value="DHQ_synth_fam"/>
</dbReference>
<dbReference type="InterPro" id="IPR030960">
    <property type="entry name" value="DHQS/DOIS_N"/>
</dbReference>
<dbReference type="InterPro" id="IPR056179">
    <property type="entry name" value="DHQS_C"/>
</dbReference>
<dbReference type="NCBIfam" id="TIGR01357">
    <property type="entry name" value="aroB"/>
    <property type="match status" value="1"/>
</dbReference>
<dbReference type="PANTHER" id="PTHR43622">
    <property type="entry name" value="3-DEHYDROQUINATE SYNTHASE"/>
    <property type="match status" value="1"/>
</dbReference>
<dbReference type="PANTHER" id="PTHR43622:SF7">
    <property type="entry name" value="3-DEHYDROQUINATE SYNTHASE, CHLOROPLASTIC"/>
    <property type="match status" value="1"/>
</dbReference>
<dbReference type="Pfam" id="PF01761">
    <property type="entry name" value="DHQ_synthase"/>
    <property type="match status" value="1"/>
</dbReference>
<dbReference type="Pfam" id="PF24621">
    <property type="entry name" value="DHQS_C"/>
    <property type="match status" value="1"/>
</dbReference>
<dbReference type="PIRSF" id="PIRSF001455">
    <property type="entry name" value="DHQ_synth"/>
    <property type="match status" value="1"/>
</dbReference>
<dbReference type="SUPFAM" id="SSF56796">
    <property type="entry name" value="Dehydroquinate synthase-like"/>
    <property type="match status" value="1"/>
</dbReference>
<reference key="1">
    <citation type="journal article" date="2004" name="Mol. Plant Microbe Interact.">
        <title>The genome sequence of the Gram-positive sugarcane pathogen Leifsonia xyli subsp. xyli.</title>
        <authorList>
            <person name="Monteiro-Vitorello C.B."/>
            <person name="Camargo L.E.A."/>
            <person name="Van Sluys M.A."/>
            <person name="Kitajima J.P."/>
            <person name="Truffi D."/>
            <person name="do Amaral A.M."/>
            <person name="Harakava R."/>
            <person name="de Oliveira J.C.F."/>
            <person name="Wood D."/>
            <person name="de Oliveira M.C."/>
            <person name="Miyaki C.Y."/>
            <person name="Takita M.A."/>
            <person name="da Silva A.C.R."/>
            <person name="Furlan L.R."/>
            <person name="Carraro D.M."/>
            <person name="Camarotte G."/>
            <person name="Almeida N.F. Jr."/>
            <person name="Carrer H."/>
            <person name="Coutinho L.L."/>
            <person name="El-Dorry H.A."/>
            <person name="Ferro M.I.T."/>
            <person name="Gagliardi P.R."/>
            <person name="Giglioti E."/>
            <person name="Goldman M.H.S."/>
            <person name="Goldman G.H."/>
            <person name="Kimura E.T."/>
            <person name="Ferro E.S."/>
            <person name="Kuramae E.E."/>
            <person name="Lemos E.G.M."/>
            <person name="Lemos M.V.F."/>
            <person name="Mauro S.M.Z."/>
            <person name="Machado M.A."/>
            <person name="Marino C.L."/>
            <person name="Menck C.F."/>
            <person name="Nunes L.R."/>
            <person name="Oliveira R.C."/>
            <person name="Pereira G.G."/>
            <person name="Siqueira W."/>
            <person name="de Souza A.A."/>
            <person name="Tsai S.M."/>
            <person name="Zanca A.S."/>
            <person name="Simpson A.J.G."/>
            <person name="Brumbley S.M."/>
            <person name="Setubal J.C."/>
        </authorList>
    </citation>
    <scope>NUCLEOTIDE SEQUENCE [LARGE SCALE GENOMIC DNA]</scope>
    <source>
        <strain>CTCB07</strain>
    </source>
</reference>
<gene>
    <name evidence="1" type="primary">aroB</name>
    <name type="ordered locus">Lxx10970</name>
</gene>